<sequence>METYAVFGNPIAHSKSPFIHQQFAQQLNIEHPYGRVLAPINDFINTLNAFFRAGGKGANVTVPFKEEAFARADELTERAALAGAVNTLKRLEDGRLLGDNTDGIGLLSDLERLSFIRPGLRILLIGAGGASRGVLLPLLSLDCAVTITNRTVSRAEELAKLFAHTGSIQALGMDELEGHEFDLIINATSSGISGDIPAIPSSLIHPGIYCYDMFYQKGKTPFLAWCEQRGSKRNADGLGMLVAQAAHAFLLWHGVLPDVEPVIKQLQEELSA</sequence>
<proteinExistence type="inferred from homology"/>
<accession>B6I1Z5</accession>
<feature type="chain" id="PRO_1000100117" description="Shikimate dehydrogenase (NADP(+))">
    <location>
        <begin position="1"/>
        <end position="272"/>
    </location>
</feature>
<feature type="active site" description="Proton acceptor" evidence="1">
    <location>
        <position position="65"/>
    </location>
</feature>
<feature type="binding site" evidence="1">
    <location>
        <begin position="14"/>
        <end position="16"/>
    </location>
    <ligand>
        <name>shikimate</name>
        <dbReference type="ChEBI" id="CHEBI:36208"/>
    </ligand>
</feature>
<feature type="binding site" evidence="1">
    <location>
        <position position="61"/>
    </location>
    <ligand>
        <name>shikimate</name>
        <dbReference type="ChEBI" id="CHEBI:36208"/>
    </ligand>
</feature>
<feature type="binding site" evidence="1">
    <location>
        <position position="77"/>
    </location>
    <ligand>
        <name>NADP(+)</name>
        <dbReference type="ChEBI" id="CHEBI:58349"/>
    </ligand>
</feature>
<feature type="binding site" evidence="1">
    <location>
        <position position="86"/>
    </location>
    <ligand>
        <name>shikimate</name>
        <dbReference type="ChEBI" id="CHEBI:36208"/>
    </ligand>
</feature>
<feature type="binding site" evidence="1">
    <location>
        <position position="102"/>
    </location>
    <ligand>
        <name>shikimate</name>
        <dbReference type="ChEBI" id="CHEBI:36208"/>
    </ligand>
</feature>
<feature type="binding site" evidence="1">
    <location>
        <begin position="126"/>
        <end position="130"/>
    </location>
    <ligand>
        <name>NADP(+)</name>
        <dbReference type="ChEBI" id="CHEBI:58349"/>
    </ligand>
</feature>
<feature type="binding site" evidence="1">
    <location>
        <begin position="149"/>
        <end position="154"/>
    </location>
    <ligand>
        <name>NADP(+)</name>
        <dbReference type="ChEBI" id="CHEBI:58349"/>
    </ligand>
</feature>
<feature type="binding site" evidence="1">
    <location>
        <position position="213"/>
    </location>
    <ligand>
        <name>NADP(+)</name>
        <dbReference type="ChEBI" id="CHEBI:58349"/>
    </ligand>
</feature>
<feature type="binding site" evidence="1">
    <location>
        <position position="215"/>
    </location>
    <ligand>
        <name>shikimate</name>
        <dbReference type="ChEBI" id="CHEBI:36208"/>
    </ligand>
</feature>
<feature type="binding site" evidence="1">
    <location>
        <position position="237"/>
    </location>
    <ligand>
        <name>NADP(+)</name>
        <dbReference type="ChEBI" id="CHEBI:58349"/>
    </ligand>
</feature>
<dbReference type="EC" id="1.1.1.25" evidence="1"/>
<dbReference type="EMBL" id="AP009240">
    <property type="protein sequence ID" value="BAG79080.1"/>
    <property type="molecule type" value="Genomic_DNA"/>
</dbReference>
<dbReference type="RefSeq" id="WP_000451211.1">
    <property type="nucleotide sequence ID" value="NC_011415.1"/>
</dbReference>
<dbReference type="SMR" id="B6I1Z5"/>
<dbReference type="GeneID" id="75204136"/>
<dbReference type="KEGG" id="ecy:ECSE_3556"/>
<dbReference type="HOGENOM" id="CLU_044063_2_1_6"/>
<dbReference type="UniPathway" id="UPA00053">
    <property type="reaction ID" value="UER00087"/>
</dbReference>
<dbReference type="Proteomes" id="UP000008199">
    <property type="component" value="Chromosome"/>
</dbReference>
<dbReference type="GO" id="GO:0005829">
    <property type="term" value="C:cytosol"/>
    <property type="evidence" value="ECO:0007669"/>
    <property type="project" value="TreeGrafter"/>
</dbReference>
<dbReference type="GO" id="GO:0050661">
    <property type="term" value="F:NADP binding"/>
    <property type="evidence" value="ECO:0007669"/>
    <property type="project" value="InterPro"/>
</dbReference>
<dbReference type="GO" id="GO:0004764">
    <property type="term" value="F:shikimate 3-dehydrogenase (NADP+) activity"/>
    <property type="evidence" value="ECO:0007669"/>
    <property type="project" value="UniProtKB-UniRule"/>
</dbReference>
<dbReference type="GO" id="GO:0008652">
    <property type="term" value="P:amino acid biosynthetic process"/>
    <property type="evidence" value="ECO:0007669"/>
    <property type="project" value="UniProtKB-KW"/>
</dbReference>
<dbReference type="GO" id="GO:0009073">
    <property type="term" value="P:aromatic amino acid family biosynthetic process"/>
    <property type="evidence" value="ECO:0007669"/>
    <property type="project" value="UniProtKB-KW"/>
</dbReference>
<dbReference type="GO" id="GO:0009423">
    <property type="term" value="P:chorismate biosynthetic process"/>
    <property type="evidence" value="ECO:0007669"/>
    <property type="project" value="UniProtKB-UniRule"/>
</dbReference>
<dbReference type="GO" id="GO:0019632">
    <property type="term" value="P:shikimate metabolic process"/>
    <property type="evidence" value="ECO:0007669"/>
    <property type="project" value="InterPro"/>
</dbReference>
<dbReference type="CDD" id="cd01065">
    <property type="entry name" value="NAD_bind_Shikimate_DH"/>
    <property type="match status" value="1"/>
</dbReference>
<dbReference type="FunFam" id="3.40.50.10860:FF:000006">
    <property type="entry name" value="Shikimate dehydrogenase (NADP(+))"/>
    <property type="match status" value="1"/>
</dbReference>
<dbReference type="FunFam" id="3.40.50.720:FF:000104">
    <property type="entry name" value="Shikimate dehydrogenase (NADP(+))"/>
    <property type="match status" value="1"/>
</dbReference>
<dbReference type="Gene3D" id="3.40.50.10860">
    <property type="entry name" value="Leucine Dehydrogenase, chain A, domain 1"/>
    <property type="match status" value="1"/>
</dbReference>
<dbReference type="Gene3D" id="3.40.50.720">
    <property type="entry name" value="NAD(P)-binding Rossmann-like Domain"/>
    <property type="match status" value="1"/>
</dbReference>
<dbReference type="HAMAP" id="MF_00222">
    <property type="entry name" value="Shikimate_DH_AroE"/>
    <property type="match status" value="1"/>
</dbReference>
<dbReference type="InterPro" id="IPR046346">
    <property type="entry name" value="Aminoacid_DH-like_N_sf"/>
</dbReference>
<dbReference type="InterPro" id="IPR036291">
    <property type="entry name" value="NAD(P)-bd_dom_sf"/>
</dbReference>
<dbReference type="InterPro" id="IPR041121">
    <property type="entry name" value="SDH_C"/>
</dbReference>
<dbReference type="InterPro" id="IPR011342">
    <property type="entry name" value="Shikimate_DH"/>
</dbReference>
<dbReference type="InterPro" id="IPR013708">
    <property type="entry name" value="Shikimate_DH-bd_N"/>
</dbReference>
<dbReference type="InterPro" id="IPR022893">
    <property type="entry name" value="Shikimate_DH_fam"/>
</dbReference>
<dbReference type="InterPro" id="IPR006151">
    <property type="entry name" value="Shikm_DH/Glu-tRNA_Rdtase"/>
</dbReference>
<dbReference type="NCBIfam" id="TIGR00507">
    <property type="entry name" value="aroE"/>
    <property type="match status" value="1"/>
</dbReference>
<dbReference type="NCBIfam" id="NF001310">
    <property type="entry name" value="PRK00258.1-2"/>
    <property type="match status" value="1"/>
</dbReference>
<dbReference type="PANTHER" id="PTHR21089:SF1">
    <property type="entry name" value="BIFUNCTIONAL 3-DEHYDROQUINATE DEHYDRATASE_SHIKIMATE DEHYDROGENASE, CHLOROPLASTIC"/>
    <property type="match status" value="1"/>
</dbReference>
<dbReference type="PANTHER" id="PTHR21089">
    <property type="entry name" value="SHIKIMATE DEHYDROGENASE"/>
    <property type="match status" value="1"/>
</dbReference>
<dbReference type="Pfam" id="PF18317">
    <property type="entry name" value="SDH_C"/>
    <property type="match status" value="1"/>
</dbReference>
<dbReference type="Pfam" id="PF01488">
    <property type="entry name" value="Shikimate_DH"/>
    <property type="match status" value="1"/>
</dbReference>
<dbReference type="Pfam" id="PF08501">
    <property type="entry name" value="Shikimate_dh_N"/>
    <property type="match status" value="1"/>
</dbReference>
<dbReference type="SUPFAM" id="SSF53223">
    <property type="entry name" value="Aminoacid dehydrogenase-like, N-terminal domain"/>
    <property type="match status" value="1"/>
</dbReference>
<dbReference type="SUPFAM" id="SSF51735">
    <property type="entry name" value="NAD(P)-binding Rossmann-fold domains"/>
    <property type="match status" value="1"/>
</dbReference>
<organism>
    <name type="scientific">Escherichia coli (strain SE11)</name>
    <dbReference type="NCBI Taxonomy" id="409438"/>
    <lineage>
        <taxon>Bacteria</taxon>
        <taxon>Pseudomonadati</taxon>
        <taxon>Pseudomonadota</taxon>
        <taxon>Gammaproteobacteria</taxon>
        <taxon>Enterobacterales</taxon>
        <taxon>Enterobacteriaceae</taxon>
        <taxon>Escherichia</taxon>
    </lineage>
</organism>
<reference key="1">
    <citation type="journal article" date="2008" name="DNA Res.">
        <title>Complete genome sequence and comparative analysis of the wild-type commensal Escherichia coli strain SE11 isolated from a healthy adult.</title>
        <authorList>
            <person name="Oshima K."/>
            <person name="Toh H."/>
            <person name="Ogura Y."/>
            <person name="Sasamoto H."/>
            <person name="Morita H."/>
            <person name="Park S.-H."/>
            <person name="Ooka T."/>
            <person name="Iyoda S."/>
            <person name="Taylor T.D."/>
            <person name="Hayashi T."/>
            <person name="Itoh K."/>
            <person name="Hattori M."/>
        </authorList>
    </citation>
    <scope>NUCLEOTIDE SEQUENCE [LARGE SCALE GENOMIC DNA]</scope>
    <source>
        <strain>SE11</strain>
    </source>
</reference>
<protein>
    <recommendedName>
        <fullName evidence="1">Shikimate dehydrogenase (NADP(+))</fullName>
        <shortName evidence="1">SDH</shortName>
        <ecNumber evidence="1">1.1.1.25</ecNumber>
    </recommendedName>
</protein>
<comment type="function">
    <text evidence="1">Involved in the biosynthesis of the chorismate, which leads to the biosynthesis of aromatic amino acids. Catalyzes the reversible NADPH linked reduction of 3-dehydroshikimate (DHSA) to yield shikimate (SA).</text>
</comment>
<comment type="catalytic activity">
    <reaction evidence="1">
        <text>shikimate + NADP(+) = 3-dehydroshikimate + NADPH + H(+)</text>
        <dbReference type="Rhea" id="RHEA:17737"/>
        <dbReference type="ChEBI" id="CHEBI:15378"/>
        <dbReference type="ChEBI" id="CHEBI:16630"/>
        <dbReference type="ChEBI" id="CHEBI:36208"/>
        <dbReference type="ChEBI" id="CHEBI:57783"/>
        <dbReference type="ChEBI" id="CHEBI:58349"/>
        <dbReference type="EC" id="1.1.1.25"/>
    </reaction>
</comment>
<comment type="pathway">
    <text evidence="1">Metabolic intermediate biosynthesis; chorismate biosynthesis; chorismate from D-erythrose 4-phosphate and phosphoenolpyruvate: step 4/7.</text>
</comment>
<comment type="subunit">
    <text evidence="1">Homodimer.</text>
</comment>
<comment type="similarity">
    <text evidence="1">Belongs to the shikimate dehydrogenase family.</text>
</comment>
<keyword id="KW-0028">Amino-acid biosynthesis</keyword>
<keyword id="KW-0057">Aromatic amino acid biosynthesis</keyword>
<keyword id="KW-0521">NADP</keyword>
<keyword id="KW-0560">Oxidoreductase</keyword>
<name>AROE_ECOSE</name>
<gene>
    <name evidence="1" type="primary">aroE</name>
    <name type="ordered locus">ECSE_3556</name>
</gene>
<evidence type="ECO:0000255" key="1">
    <source>
        <dbReference type="HAMAP-Rule" id="MF_00222"/>
    </source>
</evidence>